<organism>
    <name type="scientific">Pseudomonas aeruginosa (strain UCBPP-PA14)</name>
    <dbReference type="NCBI Taxonomy" id="208963"/>
    <lineage>
        <taxon>Bacteria</taxon>
        <taxon>Pseudomonadati</taxon>
        <taxon>Pseudomonadota</taxon>
        <taxon>Gammaproteobacteria</taxon>
        <taxon>Pseudomonadales</taxon>
        <taxon>Pseudomonadaceae</taxon>
        <taxon>Pseudomonas</taxon>
    </lineage>
</organism>
<comment type="function">
    <text evidence="1">Digests double-stranded RNA. Involved in the processing of primary rRNA transcript to yield the immediate precursors to the large and small rRNAs (23S and 16S). Processes some mRNAs, and tRNAs when they are encoded in the rRNA operon. Processes pre-crRNA and tracrRNA of type II CRISPR loci if present in the organism.</text>
</comment>
<comment type="catalytic activity">
    <reaction evidence="1">
        <text>Endonucleolytic cleavage to 5'-phosphomonoester.</text>
        <dbReference type="EC" id="3.1.26.3"/>
    </reaction>
</comment>
<comment type="cofactor">
    <cofactor evidence="1">
        <name>Mg(2+)</name>
        <dbReference type="ChEBI" id="CHEBI:18420"/>
    </cofactor>
</comment>
<comment type="subunit">
    <text evidence="1">Homodimer.</text>
</comment>
<comment type="subcellular location">
    <subcellularLocation>
        <location evidence="1">Cytoplasm</location>
    </subcellularLocation>
</comment>
<comment type="similarity">
    <text evidence="1">Belongs to the ribonuclease III family.</text>
</comment>
<sequence length="229" mass="25506">MSNSLDRLERKLGYTFKDRDLMVLALTHRSYAGRNNERLEFLGDAILNFVIGEALFHHFPQAREGQLSRLRARLVKGETLALLARGFEVGDYLRLGSGELKSGGFRRESILADAMEALIGAIYLDTGMDSARERIIAWLGPQLRELTPVDTNKDPKTRLQEFLQSRGCDLPRYEVVDIQGEPHCRTFFVDCEVALLSDKTHGHGGSRRIAEQVAAAAALVALGVENGHD</sequence>
<proteinExistence type="inferred from homology"/>
<dbReference type="EC" id="3.1.26.3" evidence="1"/>
<dbReference type="EMBL" id="CP000438">
    <property type="protein sequence ID" value="ABJ09922.1"/>
    <property type="molecule type" value="Genomic_DNA"/>
</dbReference>
<dbReference type="RefSeq" id="WP_003085565.1">
    <property type="nucleotide sequence ID" value="NZ_CP034244.1"/>
</dbReference>
<dbReference type="SMR" id="Q02HS2"/>
<dbReference type="KEGG" id="pau:PA14_54330"/>
<dbReference type="PseudoCAP" id="PA14_54330"/>
<dbReference type="HOGENOM" id="CLU_000907_1_1_6"/>
<dbReference type="BioCyc" id="PAER208963:G1G74-4574-MONOMER"/>
<dbReference type="Proteomes" id="UP000000653">
    <property type="component" value="Chromosome"/>
</dbReference>
<dbReference type="GO" id="GO:0005737">
    <property type="term" value="C:cytoplasm"/>
    <property type="evidence" value="ECO:0007669"/>
    <property type="project" value="UniProtKB-SubCell"/>
</dbReference>
<dbReference type="GO" id="GO:0003725">
    <property type="term" value="F:double-stranded RNA binding"/>
    <property type="evidence" value="ECO:0007669"/>
    <property type="project" value="TreeGrafter"/>
</dbReference>
<dbReference type="GO" id="GO:0046872">
    <property type="term" value="F:metal ion binding"/>
    <property type="evidence" value="ECO:0007669"/>
    <property type="project" value="UniProtKB-KW"/>
</dbReference>
<dbReference type="GO" id="GO:0004525">
    <property type="term" value="F:ribonuclease III activity"/>
    <property type="evidence" value="ECO:0007669"/>
    <property type="project" value="UniProtKB-UniRule"/>
</dbReference>
<dbReference type="GO" id="GO:0019843">
    <property type="term" value="F:rRNA binding"/>
    <property type="evidence" value="ECO:0007669"/>
    <property type="project" value="UniProtKB-KW"/>
</dbReference>
<dbReference type="GO" id="GO:0006397">
    <property type="term" value="P:mRNA processing"/>
    <property type="evidence" value="ECO:0007669"/>
    <property type="project" value="UniProtKB-UniRule"/>
</dbReference>
<dbReference type="GO" id="GO:0010468">
    <property type="term" value="P:regulation of gene expression"/>
    <property type="evidence" value="ECO:0007669"/>
    <property type="project" value="TreeGrafter"/>
</dbReference>
<dbReference type="GO" id="GO:0006364">
    <property type="term" value="P:rRNA processing"/>
    <property type="evidence" value="ECO:0007669"/>
    <property type="project" value="UniProtKB-UniRule"/>
</dbReference>
<dbReference type="GO" id="GO:0008033">
    <property type="term" value="P:tRNA processing"/>
    <property type="evidence" value="ECO:0007669"/>
    <property type="project" value="UniProtKB-KW"/>
</dbReference>
<dbReference type="CDD" id="cd10845">
    <property type="entry name" value="DSRM_RNAse_III_family"/>
    <property type="match status" value="1"/>
</dbReference>
<dbReference type="CDD" id="cd00593">
    <property type="entry name" value="RIBOc"/>
    <property type="match status" value="1"/>
</dbReference>
<dbReference type="FunFam" id="1.10.1520.10:FF:000001">
    <property type="entry name" value="Ribonuclease 3"/>
    <property type="match status" value="1"/>
</dbReference>
<dbReference type="FunFam" id="3.30.160.20:FF:000077">
    <property type="entry name" value="Ribonuclease 3"/>
    <property type="match status" value="1"/>
</dbReference>
<dbReference type="Gene3D" id="3.30.160.20">
    <property type="match status" value="1"/>
</dbReference>
<dbReference type="Gene3D" id="1.10.1520.10">
    <property type="entry name" value="Ribonuclease III domain"/>
    <property type="match status" value="1"/>
</dbReference>
<dbReference type="HAMAP" id="MF_00104">
    <property type="entry name" value="RNase_III"/>
    <property type="match status" value="1"/>
</dbReference>
<dbReference type="InterPro" id="IPR014720">
    <property type="entry name" value="dsRBD_dom"/>
</dbReference>
<dbReference type="InterPro" id="IPR011907">
    <property type="entry name" value="RNase_III"/>
</dbReference>
<dbReference type="InterPro" id="IPR000999">
    <property type="entry name" value="RNase_III_dom"/>
</dbReference>
<dbReference type="InterPro" id="IPR036389">
    <property type="entry name" value="RNase_III_sf"/>
</dbReference>
<dbReference type="NCBIfam" id="TIGR02191">
    <property type="entry name" value="RNaseIII"/>
    <property type="match status" value="1"/>
</dbReference>
<dbReference type="PANTHER" id="PTHR11207:SF0">
    <property type="entry name" value="RIBONUCLEASE 3"/>
    <property type="match status" value="1"/>
</dbReference>
<dbReference type="PANTHER" id="PTHR11207">
    <property type="entry name" value="RIBONUCLEASE III"/>
    <property type="match status" value="1"/>
</dbReference>
<dbReference type="Pfam" id="PF00035">
    <property type="entry name" value="dsrm"/>
    <property type="match status" value="1"/>
</dbReference>
<dbReference type="Pfam" id="PF14622">
    <property type="entry name" value="Ribonucleas_3_3"/>
    <property type="match status" value="1"/>
</dbReference>
<dbReference type="SMART" id="SM00358">
    <property type="entry name" value="DSRM"/>
    <property type="match status" value="1"/>
</dbReference>
<dbReference type="SMART" id="SM00535">
    <property type="entry name" value="RIBOc"/>
    <property type="match status" value="1"/>
</dbReference>
<dbReference type="SUPFAM" id="SSF54768">
    <property type="entry name" value="dsRNA-binding domain-like"/>
    <property type="match status" value="1"/>
</dbReference>
<dbReference type="SUPFAM" id="SSF69065">
    <property type="entry name" value="RNase III domain-like"/>
    <property type="match status" value="1"/>
</dbReference>
<dbReference type="PROSITE" id="PS50137">
    <property type="entry name" value="DS_RBD"/>
    <property type="match status" value="1"/>
</dbReference>
<dbReference type="PROSITE" id="PS00517">
    <property type="entry name" value="RNASE_3_1"/>
    <property type="match status" value="1"/>
</dbReference>
<dbReference type="PROSITE" id="PS50142">
    <property type="entry name" value="RNASE_3_2"/>
    <property type="match status" value="1"/>
</dbReference>
<keyword id="KW-0963">Cytoplasm</keyword>
<keyword id="KW-0255">Endonuclease</keyword>
<keyword id="KW-0378">Hydrolase</keyword>
<keyword id="KW-0460">Magnesium</keyword>
<keyword id="KW-0479">Metal-binding</keyword>
<keyword id="KW-0507">mRNA processing</keyword>
<keyword id="KW-0540">Nuclease</keyword>
<keyword id="KW-0694">RNA-binding</keyword>
<keyword id="KW-0698">rRNA processing</keyword>
<keyword id="KW-0699">rRNA-binding</keyword>
<keyword id="KW-0819">tRNA processing</keyword>
<accession>Q02HS2</accession>
<name>RNC_PSEAB</name>
<reference key="1">
    <citation type="journal article" date="2006" name="Genome Biol.">
        <title>Genomic analysis reveals that Pseudomonas aeruginosa virulence is combinatorial.</title>
        <authorList>
            <person name="Lee D.G."/>
            <person name="Urbach J.M."/>
            <person name="Wu G."/>
            <person name="Liberati N.T."/>
            <person name="Feinbaum R.L."/>
            <person name="Miyata S."/>
            <person name="Diggins L.T."/>
            <person name="He J."/>
            <person name="Saucier M."/>
            <person name="Deziel E."/>
            <person name="Friedman L."/>
            <person name="Li L."/>
            <person name="Grills G."/>
            <person name="Montgomery K."/>
            <person name="Kucherlapati R."/>
            <person name="Rahme L.G."/>
            <person name="Ausubel F.M."/>
        </authorList>
    </citation>
    <scope>NUCLEOTIDE SEQUENCE [LARGE SCALE GENOMIC DNA]</scope>
    <source>
        <strain>UCBPP-PA14</strain>
    </source>
</reference>
<gene>
    <name evidence="1" type="primary">rnc</name>
    <name type="ordered locus">PA14_54330</name>
</gene>
<evidence type="ECO:0000255" key="1">
    <source>
        <dbReference type="HAMAP-Rule" id="MF_00104"/>
    </source>
</evidence>
<feature type="chain" id="PRO_1000075787" description="Ribonuclease 3">
    <location>
        <begin position="1"/>
        <end position="229"/>
    </location>
</feature>
<feature type="domain" description="RNase III" evidence="1">
    <location>
        <begin position="5"/>
        <end position="127"/>
    </location>
</feature>
<feature type="domain" description="DRBM" evidence="1">
    <location>
        <begin position="154"/>
        <end position="224"/>
    </location>
</feature>
<feature type="active site" evidence="1">
    <location>
        <position position="44"/>
    </location>
</feature>
<feature type="active site" evidence="1">
    <location>
        <position position="116"/>
    </location>
</feature>
<feature type="binding site" evidence="1">
    <location>
        <position position="40"/>
    </location>
    <ligand>
        <name>Mg(2+)</name>
        <dbReference type="ChEBI" id="CHEBI:18420"/>
    </ligand>
</feature>
<feature type="binding site" evidence="1">
    <location>
        <position position="113"/>
    </location>
    <ligand>
        <name>Mg(2+)</name>
        <dbReference type="ChEBI" id="CHEBI:18420"/>
    </ligand>
</feature>
<feature type="binding site" evidence="1">
    <location>
        <position position="116"/>
    </location>
    <ligand>
        <name>Mg(2+)</name>
        <dbReference type="ChEBI" id="CHEBI:18420"/>
    </ligand>
</feature>
<protein>
    <recommendedName>
        <fullName evidence="1">Ribonuclease 3</fullName>
        <ecNumber evidence="1">3.1.26.3</ecNumber>
    </recommendedName>
    <alternativeName>
        <fullName evidence="1">Ribonuclease III</fullName>
        <shortName evidence="1">RNase III</shortName>
    </alternativeName>
</protein>